<accession>Q53VY2</accession>
<evidence type="ECO:0000250" key="1"/>
<evidence type="ECO:0000255" key="2">
    <source>
        <dbReference type="PROSITE-ProRule" id="PRU00974"/>
    </source>
</evidence>
<evidence type="ECO:0000269" key="3">
    <source>
    </source>
</evidence>
<evidence type="ECO:0000305" key="4"/>
<evidence type="ECO:0007829" key="5">
    <source>
        <dbReference type="PDB" id="3SK9"/>
    </source>
</evidence>
<gene>
    <name type="primary">cas3</name>
    <name type="ordered locus">TTHB187</name>
</gene>
<dbReference type="EC" id="3.1.-.-"/>
<dbReference type="EC" id="3.6.4.-"/>
<dbReference type="EMBL" id="AP008227">
    <property type="protein sequence ID" value="BAD71983.1"/>
    <property type="molecule type" value="Genomic_DNA"/>
</dbReference>
<dbReference type="RefSeq" id="WP_011229117.1">
    <property type="nucleotide sequence ID" value="NC_006462.1"/>
</dbReference>
<dbReference type="RefSeq" id="YP_145426.1">
    <property type="nucleotide sequence ID" value="NC_006462.1"/>
</dbReference>
<dbReference type="PDB" id="3SK9">
    <property type="method" value="X-ray"/>
    <property type="resolution" value="1.80 A"/>
    <property type="chains" value="A=6-260"/>
</dbReference>
<dbReference type="PDB" id="3SKD">
    <property type="method" value="X-ray"/>
    <property type="resolution" value="2.00 A"/>
    <property type="chains" value="A=6-260"/>
</dbReference>
<dbReference type="PDBsum" id="3SK9"/>
<dbReference type="PDBsum" id="3SKD"/>
<dbReference type="SMR" id="Q53VY2"/>
<dbReference type="EnsemblBacteria" id="BAD71983">
    <property type="protein sequence ID" value="BAD71983"/>
    <property type="gene ID" value="BAD71983"/>
</dbReference>
<dbReference type="GeneID" id="3167883"/>
<dbReference type="KEGG" id="ttj:TTHB187"/>
<dbReference type="PATRIC" id="fig|300852.9.peg.2138"/>
<dbReference type="HOGENOM" id="CLU_013924_1_0_0"/>
<dbReference type="PhylomeDB" id="Q53VY2"/>
<dbReference type="EvolutionaryTrace" id="Q53VY2"/>
<dbReference type="Proteomes" id="UP000000532">
    <property type="component" value="Plasmid pTT27"/>
</dbReference>
<dbReference type="GO" id="GO:0005524">
    <property type="term" value="F:ATP binding"/>
    <property type="evidence" value="ECO:0007669"/>
    <property type="project" value="UniProtKB-KW"/>
</dbReference>
<dbReference type="GO" id="GO:0004519">
    <property type="term" value="F:endonuclease activity"/>
    <property type="evidence" value="ECO:0007669"/>
    <property type="project" value="UniProtKB-KW"/>
</dbReference>
<dbReference type="GO" id="GO:0046872">
    <property type="term" value="F:metal ion binding"/>
    <property type="evidence" value="ECO:0007669"/>
    <property type="project" value="UniProtKB-KW"/>
</dbReference>
<dbReference type="GO" id="GO:0003723">
    <property type="term" value="F:RNA binding"/>
    <property type="evidence" value="ECO:0007669"/>
    <property type="project" value="TreeGrafter"/>
</dbReference>
<dbReference type="GO" id="GO:0003724">
    <property type="term" value="F:RNA helicase activity"/>
    <property type="evidence" value="ECO:0007669"/>
    <property type="project" value="TreeGrafter"/>
</dbReference>
<dbReference type="GO" id="GO:0051607">
    <property type="term" value="P:defense response to virus"/>
    <property type="evidence" value="ECO:0007669"/>
    <property type="project" value="UniProtKB-KW"/>
</dbReference>
<dbReference type="CDD" id="cd09641">
    <property type="entry name" value="Cas3''_I"/>
    <property type="match status" value="1"/>
</dbReference>
<dbReference type="Gene3D" id="1.10.3210.30">
    <property type="match status" value="1"/>
</dbReference>
<dbReference type="Gene3D" id="3.40.50.300">
    <property type="entry name" value="P-loop containing nucleotide triphosphate hydrolases"/>
    <property type="match status" value="1"/>
</dbReference>
<dbReference type="InterPro" id="IPR054712">
    <property type="entry name" value="Cas3-like_dom"/>
</dbReference>
<dbReference type="InterPro" id="IPR041372">
    <property type="entry name" value="Cas3_C"/>
</dbReference>
<dbReference type="InterPro" id="IPR006483">
    <property type="entry name" value="CRISPR-assoc_Cas3_HD"/>
</dbReference>
<dbReference type="InterPro" id="IPR038257">
    <property type="entry name" value="CRISPR-assoc_Cas3_HD_sf"/>
</dbReference>
<dbReference type="InterPro" id="IPR050547">
    <property type="entry name" value="DEAD_box_RNA_helicases"/>
</dbReference>
<dbReference type="InterPro" id="IPR014001">
    <property type="entry name" value="Helicase_ATP-bd"/>
</dbReference>
<dbReference type="InterPro" id="IPR006474">
    <property type="entry name" value="Helicase_Cas3_CRISPR-ass_core"/>
</dbReference>
<dbReference type="InterPro" id="IPR027417">
    <property type="entry name" value="P-loop_NTPase"/>
</dbReference>
<dbReference type="NCBIfam" id="TIGR01587">
    <property type="entry name" value="cas3_core"/>
    <property type="match status" value="1"/>
</dbReference>
<dbReference type="NCBIfam" id="TIGR01596">
    <property type="entry name" value="cas3_HD"/>
    <property type="match status" value="1"/>
</dbReference>
<dbReference type="PANTHER" id="PTHR47963:SF9">
    <property type="entry name" value="CRISPR-ASSOCIATED ENDONUCLEASE_HELICASE CAS3"/>
    <property type="match status" value="1"/>
</dbReference>
<dbReference type="PANTHER" id="PTHR47963">
    <property type="entry name" value="DEAD-BOX ATP-DEPENDENT RNA HELICASE 47, MITOCHONDRIAL"/>
    <property type="match status" value="1"/>
</dbReference>
<dbReference type="Pfam" id="PF22590">
    <property type="entry name" value="Cas3-like_C_2"/>
    <property type="match status" value="1"/>
</dbReference>
<dbReference type="Pfam" id="PF18395">
    <property type="entry name" value="Cas3_C"/>
    <property type="match status" value="1"/>
</dbReference>
<dbReference type="Pfam" id="PF18019">
    <property type="entry name" value="Cas3_HD"/>
    <property type="match status" value="1"/>
</dbReference>
<dbReference type="SMART" id="SM00487">
    <property type="entry name" value="DEXDc"/>
    <property type="match status" value="1"/>
</dbReference>
<dbReference type="SUPFAM" id="SSF52540">
    <property type="entry name" value="P-loop containing nucleoside triphosphate hydrolases"/>
    <property type="match status" value="1"/>
</dbReference>
<dbReference type="PROSITE" id="PS51643">
    <property type="entry name" value="HD_CAS3"/>
    <property type="match status" value="1"/>
</dbReference>
<protein>
    <recommendedName>
        <fullName>CRISPR-associated endonuclease/helicase Cas3</fullName>
        <ecNumber>3.1.-.-</ecNumber>
        <ecNumber>3.6.4.-</ecNumber>
    </recommendedName>
    <alternativeName>
        <fullName>CRISPR-associated ssDNA endonuclease/helicase Cas3</fullName>
    </alternativeName>
</protein>
<geneLocation type="plasmid">
    <name>pTT27</name>
</geneLocation>
<reference key="1">
    <citation type="submission" date="2004-11" db="EMBL/GenBank/DDBJ databases">
        <title>Complete genome sequence of Thermus thermophilus HB8.</title>
        <authorList>
            <person name="Masui R."/>
            <person name="Kurokawa K."/>
            <person name="Nakagawa N."/>
            <person name="Tokunaga F."/>
            <person name="Koyama Y."/>
            <person name="Shibata T."/>
            <person name="Oshima T."/>
            <person name="Yokoyama S."/>
            <person name="Yasunaga T."/>
            <person name="Kuramitsu S."/>
        </authorList>
    </citation>
    <scope>NUCLEOTIDE SEQUENCE [LARGE SCALE GENOMIC DNA]</scope>
    <source>
        <strain>ATCC 27634 / DSM 579 / HB8</strain>
    </source>
</reference>
<reference key="2">
    <citation type="journal article" date="2011" name="J. Biol. Chem.">
        <title>Structural and biochemical analysis of nuclease domain of clustered regularly interspaced short palindromic repeat (CRISPR)-associated protein 3 (Cas3).</title>
        <authorList>
            <person name="Mulepati S."/>
            <person name="Bailey S."/>
        </authorList>
    </citation>
    <scope>X-RAY CRYSTALLOGRAPHY (1.80 ANGSTROMS) OF 6-260 IN PRESENCE AND ABSENCE OF NI(2+)</scope>
    <scope>FUNCTION AS A SSDNA ENDONUCLEASE</scope>
    <scope>ACTIVITY REGULATION</scope>
    <scope>COFACTOR</scope>
    <scope>MUTAGENESIS OF HIS-24; HIS-69; ASP-70; LYS-73; HIS-105; HIS-137; HIS-138 AND ASP-205</scope>
    <source>
        <strain>ATCC 27634 / DSM 579 / HB8</strain>
    </source>
</reference>
<name>CAS3_THET8</name>
<sequence length="920" mass="102127">MSVEEAALALWAKSGNPFHPLLAHMLDTAAVALAVLRMEPPRTRALYAEDWGLPEEGALAWAAALVGLHDLGKASPVFQAGWEEGKERVQRAGLPFGELLDWVAHGVFTELFLRRLLKEKGLPERAANDLAAALGAHHGFPANAEEKSRARRHLRTEDPLWKEARRWLLEEVFRRLGAPLPPSQGNGEARPEAVLRVMALASFADWVASDPSLFPYGRDPRRGDYLKEALRLAQEALNRLGWPAFAKAQRREFGELFPYIPKPNALQESVPALLEGACTPVLLLVEAPMGMGKTEAALYAHHLLQAGLGHRGLYVALPTQATANGLFPRVRGFLERLGEGSRLELQLQHGTALLNPHYAGLLERAAPRQVGEEEEGGAVASAWFSARKRAMLAPYGVGTLDQALLGVLRVKHHFVRLWGLMNRVVVLDEVHAYDVYTSGLLQALLRWLRALGSSAVVMTATLPPSRRRALLEAWAGEEVEGQDLGPYPRVVLVGEGVKARSLPPAREVEVALEVLREVDVEPLAQRLKGALPGAVGAIVNTVDRAQDLYRALGEGTPLTLEELARRLGGISGGQAWEEVRQALPERGGEVVGKVLTDGTLVFLLHARFPAEERALRGSVVLALFGKGGPRPPRAILVATQVAEQSLDLDFDLLYTDLAPIDLLFQRSGRLHRHERPRPEEHARPRLLLGVPEDLDFGKPLYWDKVYEDYVLLATWRALSGRDRLRVPGDLEALLEEIYEGENPESFPEGLRERAKKSLKALQERRDREANTARRLSLSELDRLLAYWDEGALVAQERLEDDEEKAETQRLLTRLGDPSVAVVPLFRVGEGLFLDREGRRRAPLKGEVSREEAEALFRRAVRLSRFPLPQELLKEEPPPAWRKSGLLRGLRPLEVGRVFRSGERAFQVELDPELGVVYLPV</sequence>
<comment type="function">
    <text evidence="3">CRISPR (clustered regularly interspaced short palindromic repeat), is an adaptive immune system that provides protection against mobile genetic elements (viruses, transposable elements and conjugative plasmids). CRISPR clusters contain sequences complementary to antecedent mobile elements and target invading nucleic acids. CRISPR clusters are transcribed and processed into CRISPR RNA (crRNA). Cas3 plus Cascade participate in CRISPR interference, the third stage of CRISPR immunity. The N-terminal domain (residues 6-260) acts as a ssDNA endonuclease, has no activity on dsDNA.</text>
</comment>
<comment type="cofactor">
    <cofactor evidence="3">
        <name>Mn(2+)</name>
        <dbReference type="ChEBI" id="CHEBI:29035"/>
    </cofactor>
    <cofactor evidence="3">
        <name>Co(2+)</name>
        <dbReference type="ChEBI" id="CHEBI:48828"/>
    </cofactor>
    <cofactor evidence="3">
        <name>Ni(2+)</name>
        <dbReference type="ChEBI" id="CHEBI:49786"/>
    </cofactor>
    <cofactor evidence="3">
        <name>Cu(2+)</name>
        <dbReference type="ChEBI" id="CHEBI:29036"/>
    </cofactor>
    <cofactor evidence="3">
        <name>Zn(2+)</name>
        <dbReference type="ChEBI" id="CHEBI:29105"/>
    </cofactor>
    <text evidence="3">The ssDNA endonuclease activity (residues 6-260) is stimulated by Mn(2+), Co(2+), Ni(2+), Cu(2+) and Zn(2+), but not by Mg(2+) or Ca(2+). A Ni(2+) ion is seen in crystals upon soaking.</text>
</comment>
<comment type="activity regulation">
    <text evidence="3">Inhibited by EDTA, Mg(2+) and Ca(2+).</text>
</comment>
<comment type="domain">
    <text>Proteins of this family have an N-terminal nuclease domain and a C-terminal helicase/ATPase domain. In some CRISPR/Cas systems the domains are swapped, in others they are encoded separately.</text>
</comment>
<comment type="similarity">
    <text evidence="4">In the N-terminal section; belongs to the CRISPR-associated nuclease Cas3-HD family.</text>
</comment>
<comment type="similarity">
    <text evidence="4">In the central section; belongs to the CRISPR-associated helicase Cas3 family.</text>
</comment>
<keyword id="KW-0002">3D-structure</keyword>
<keyword id="KW-0051">Antiviral defense</keyword>
<keyword id="KW-0067">ATP-binding</keyword>
<keyword id="KW-0255">Endonuclease</keyword>
<keyword id="KW-0347">Helicase</keyword>
<keyword id="KW-0378">Hydrolase</keyword>
<keyword id="KW-0479">Metal-binding</keyword>
<keyword id="KW-0540">Nuclease</keyword>
<keyword id="KW-0547">Nucleotide-binding</keyword>
<keyword id="KW-0614">Plasmid</keyword>
<keyword id="KW-1185">Reference proteome</keyword>
<proteinExistence type="evidence at protein level"/>
<feature type="chain" id="PRO_0000417609" description="CRISPR-associated endonuclease/helicase Cas3">
    <location>
        <begin position="1"/>
        <end position="920"/>
    </location>
</feature>
<feature type="domain" description="HD Cas3-type" evidence="2">
    <location>
        <begin position="14"/>
        <end position="207"/>
    </location>
</feature>
<feature type="domain" description="Helicase ATP-binding">
    <location>
        <begin position="274"/>
        <end position="480"/>
    </location>
</feature>
<feature type="short sequence motif" description="DEAH box">
    <location>
        <begin position="428"/>
        <end position="431"/>
    </location>
</feature>
<feature type="binding site">
    <location>
        <position position="24"/>
    </location>
    <ligand>
        <name>a divalent metal cation</name>
        <dbReference type="ChEBI" id="CHEBI:60240"/>
    </ligand>
</feature>
<feature type="binding site">
    <location>
        <position position="69"/>
    </location>
    <ligand>
        <name>a divalent metal cation</name>
        <dbReference type="ChEBI" id="CHEBI:60240"/>
    </ligand>
</feature>
<feature type="binding site">
    <location>
        <position position="70"/>
    </location>
    <ligand>
        <name>a divalent metal cation</name>
        <dbReference type="ChEBI" id="CHEBI:60240"/>
    </ligand>
</feature>
<feature type="binding site">
    <location>
        <position position="205"/>
    </location>
    <ligand>
        <name>a divalent metal cation</name>
        <dbReference type="ChEBI" id="CHEBI:60240"/>
    </ligand>
</feature>
<feature type="binding site" evidence="1">
    <location>
        <begin position="287"/>
        <end position="294"/>
    </location>
    <ligand>
        <name>ATP</name>
        <dbReference type="ChEBI" id="CHEBI:30616"/>
    </ligand>
</feature>
<feature type="mutagenesis site" description="Loss of endonuclease activity." evidence="3">
    <original>H</original>
    <variation>A</variation>
    <location>
        <position position="24"/>
    </location>
</feature>
<feature type="mutagenesis site" description="Loss of endonuclease activity." evidence="3">
    <original>H</original>
    <variation>A</variation>
    <location>
        <position position="69"/>
    </location>
</feature>
<feature type="mutagenesis site" description="Loss of endonuclease activity." evidence="3">
    <original>D</original>
    <variation>A</variation>
    <location>
        <position position="70"/>
    </location>
</feature>
<feature type="mutagenesis site" description="Loss of endonuclease activity." evidence="3">
    <original>K</original>
    <variation>A</variation>
    <location>
        <position position="73"/>
    </location>
</feature>
<feature type="mutagenesis site" description="Loss of endonuclease activity." evidence="3">
    <original>H</original>
    <variation>A</variation>
    <location>
        <position position="105"/>
    </location>
</feature>
<feature type="mutagenesis site" description="Loss of endonuclease activity." evidence="3">
    <original>H</original>
    <variation>A</variation>
    <location>
        <position position="137"/>
    </location>
</feature>
<feature type="mutagenesis site" description="Loss of endonuclease activity." evidence="3">
    <original>H</original>
    <variation>A</variation>
    <location>
        <position position="138"/>
    </location>
</feature>
<feature type="mutagenesis site" description="Loss of endonuclease activity." evidence="3">
    <original>D</original>
    <variation>A</variation>
    <location>
        <position position="205"/>
    </location>
</feature>
<feature type="helix" evidence="5">
    <location>
        <begin position="6"/>
        <end position="11"/>
    </location>
</feature>
<feature type="strand" evidence="5">
    <location>
        <begin position="13"/>
        <end position="16"/>
    </location>
</feature>
<feature type="helix" evidence="5">
    <location>
        <begin position="21"/>
        <end position="38"/>
    </location>
</feature>
<feature type="helix" evidence="5">
    <location>
        <begin position="41"/>
        <end position="51"/>
    </location>
</feature>
<feature type="helix" evidence="5">
    <location>
        <begin position="55"/>
        <end position="66"/>
    </location>
</feature>
<feature type="turn" evidence="5">
    <location>
        <begin position="67"/>
        <end position="70"/>
    </location>
</feature>
<feature type="helix" evidence="5">
    <location>
        <begin position="71"/>
        <end position="73"/>
    </location>
</feature>
<feature type="helix" evidence="5">
    <location>
        <begin position="76"/>
        <end position="78"/>
    </location>
</feature>
<feature type="helix" evidence="5">
    <location>
        <begin position="105"/>
        <end position="119"/>
    </location>
</feature>
<feature type="helix" evidence="5">
    <location>
        <begin position="124"/>
        <end position="133"/>
    </location>
</feature>
<feature type="turn" evidence="5">
    <location>
        <begin position="136"/>
        <end position="139"/>
    </location>
</feature>
<feature type="helix" evidence="5">
    <location>
        <begin position="144"/>
        <end position="156"/>
    </location>
</feature>
<feature type="helix" evidence="5">
    <location>
        <begin position="160"/>
        <end position="176"/>
    </location>
</feature>
<feature type="helix" evidence="5">
    <location>
        <begin position="191"/>
        <end position="208"/>
    </location>
</feature>
<feature type="turn" evidence="5">
    <location>
        <begin position="211"/>
        <end position="213"/>
    </location>
</feature>
<feature type="helix" evidence="5">
    <location>
        <begin position="225"/>
        <end position="241"/>
    </location>
</feature>
<feature type="turn" evidence="5">
    <location>
        <begin position="243"/>
        <end position="245"/>
    </location>
</feature>
<feature type="strand" evidence="5">
    <location>
        <begin position="248"/>
        <end position="252"/>
    </location>
</feature>
<feature type="strand" evidence="5">
    <location>
        <begin position="255"/>
        <end position="259"/>
    </location>
</feature>
<organism>
    <name type="scientific">Thermus thermophilus (strain ATCC 27634 / DSM 579 / HB8)</name>
    <dbReference type="NCBI Taxonomy" id="300852"/>
    <lineage>
        <taxon>Bacteria</taxon>
        <taxon>Thermotogati</taxon>
        <taxon>Deinococcota</taxon>
        <taxon>Deinococci</taxon>
        <taxon>Thermales</taxon>
        <taxon>Thermaceae</taxon>
        <taxon>Thermus</taxon>
    </lineage>
</organism>